<organism>
    <name type="scientific">Ovis aries</name>
    <name type="common">Sheep</name>
    <dbReference type="NCBI Taxonomy" id="9940"/>
    <lineage>
        <taxon>Eukaryota</taxon>
        <taxon>Metazoa</taxon>
        <taxon>Chordata</taxon>
        <taxon>Craniata</taxon>
        <taxon>Vertebrata</taxon>
        <taxon>Euteleostomi</taxon>
        <taxon>Mammalia</taxon>
        <taxon>Eutheria</taxon>
        <taxon>Laurasiatheria</taxon>
        <taxon>Artiodactyla</taxon>
        <taxon>Ruminantia</taxon>
        <taxon>Pecora</taxon>
        <taxon>Bovidae</taxon>
        <taxon>Caprinae</taxon>
        <taxon>Ovis</taxon>
    </lineage>
</organism>
<gene>
    <name type="primary">PGD</name>
</gene>
<protein>
    <recommendedName>
        <fullName>6-phosphogluconate dehydrogenase, decarboxylating</fullName>
        <ecNumber>1.1.1.44</ecNumber>
    </recommendedName>
</protein>
<name>6PGD_SHEEP</name>
<comment type="function">
    <text>Catalyzes the oxidative decarboxylation of 6-phosphogluconate to ribulose 5-phosphate and CO(2), with concomitant reduction of NADP to NADPH.</text>
</comment>
<comment type="catalytic activity">
    <reaction>
        <text>6-phospho-D-gluconate + NADP(+) = D-ribulose 5-phosphate + CO2 + NADPH</text>
        <dbReference type="Rhea" id="RHEA:10116"/>
        <dbReference type="ChEBI" id="CHEBI:16526"/>
        <dbReference type="ChEBI" id="CHEBI:57783"/>
        <dbReference type="ChEBI" id="CHEBI:58121"/>
        <dbReference type="ChEBI" id="CHEBI:58349"/>
        <dbReference type="ChEBI" id="CHEBI:58759"/>
        <dbReference type="EC" id="1.1.1.44"/>
    </reaction>
</comment>
<comment type="pathway">
    <text>Carbohydrate degradation; pentose phosphate pathway; D-ribulose 5-phosphate from D-glucose 6-phosphate (oxidative stage): step 3/3.</text>
</comment>
<comment type="subunit">
    <text evidence="3 5">Homodimer.</text>
</comment>
<comment type="subcellular location">
    <subcellularLocation>
        <location evidence="1">Cytoplasm</location>
    </subcellularLocation>
</comment>
<comment type="similarity">
    <text evidence="6">Belongs to the 6-phosphogluconate dehydrogenase family.</text>
</comment>
<comment type="sequence caution" evidence="6">
    <conflict type="miscellaneous discrepancy" ref="2"/>
    <text>Incorrect CNBR peptide order. Many sequencing errors.</text>
</comment>
<sequence>MAQADIALIGLAVMGQNLILNMNDHGFVVCAFNRTVSKVDDFLANEAKGTKVLGAHSLEEMVSKLKKPRRIILLVKAGQAVDNFIEKLVPLLDIGDIIIDGGNSEYRDTMRRCRDLKDKGILFVGSGVSGGEDGARYGPSLMPGGNKEAWPHIKAIFQGIAAKVGTGEPCCDWVGDDGAGHFVKMVHNGIEYGDMQLICEAYHLMKDVLGLGHKEMAKAFEEWNKTELDSFLIEITASILKFQDADGKHLLPKIRDSAGQKGTGKWTAISALEYGVPVTLIGEAVFARCLSSLKDERIQASKKLKGPQNIPFEGDKKSFLEDIRKALYASKIISYAQGFMLLRQAATEFGWTLNYGGIALMWRGGCIIRSVFLGKIKDAFDRNPGLQNLLLDDFFKSAVENCQDSWRRAISTGVQAGIPMPCFTTALSFYDGYRHAMLPANLIQAQRDYFGAHTYELLAKPGQFIHTNWTGHGGSVSSSSYNA</sequence>
<evidence type="ECO:0000250" key="1"/>
<evidence type="ECO:0000250" key="2">
    <source>
        <dbReference type="UniProtKB" id="Q9DCD0"/>
    </source>
</evidence>
<evidence type="ECO:0000269" key="3">
    <source>
    </source>
</evidence>
<evidence type="ECO:0000269" key="4">
    <source>
    </source>
</evidence>
<evidence type="ECO:0000269" key="5">
    <source>
    </source>
</evidence>
<evidence type="ECO:0000305" key="6"/>
<evidence type="ECO:0007829" key="7">
    <source>
        <dbReference type="PDB" id="1PGN"/>
    </source>
</evidence>
<evidence type="ECO:0007829" key="8">
    <source>
        <dbReference type="PDB" id="2PGD"/>
    </source>
</evidence>
<accession>P00349</accession>
<feature type="initiator methionine" description="Removed" evidence="4">
    <location>
        <position position="1"/>
    </location>
</feature>
<feature type="chain" id="PRO_0000090066" description="6-phosphogluconate dehydrogenase, decarboxylating">
    <location>
        <begin position="2"/>
        <end position="483"/>
    </location>
</feature>
<feature type="active site" description="Proton acceptor">
    <location>
        <position position="184"/>
    </location>
</feature>
<feature type="active site" description="Proton donor">
    <location>
        <position position="191"/>
    </location>
</feature>
<feature type="binding site" description="in other chain">
    <location>
        <begin position="10"/>
        <end position="15"/>
    </location>
    <ligand>
        <name>NADP(+)</name>
        <dbReference type="ChEBI" id="CHEBI:58349"/>
        <note>ligand shared between dimeric partners</note>
    </ligand>
</feature>
<feature type="binding site" description="in other chain">
    <location>
        <begin position="33"/>
        <end position="35"/>
    </location>
    <ligand>
        <name>NADP(+)</name>
        <dbReference type="ChEBI" id="CHEBI:58349"/>
        <note>ligand shared between dimeric partners</note>
    </ligand>
</feature>
<feature type="binding site" description="in other chain">
    <location>
        <begin position="75"/>
        <end position="77"/>
    </location>
    <ligand>
        <name>NADP(+)</name>
        <dbReference type="ChEBI" id="CHEBI:58349"/>
        <note>ligand shared between dimeric partners</note>
    </ligand>
</feature>
<feature type="binding site" description="in other chain">
    <location>
        <position position="103"/>
    </location>
    <ligand>
        <name>NADP(+)</name>
        <dbReference type="ChEBI" id="CHEBI:58349"/>
        <note>ligand shared between dimeric partners</note>
    </ligand>
</feature>
<feature type="binding site" description="in other chain">
    <location>
        <position position="103"/>
    </location>
    <ligand>
        <name>substrate</name>
        <note>ligand shared between dimeric partners</note>
    </ligand>
</feature>
<feature type="binding site" description="in other chain">
    <location>
        <position position="129"/>
    </location>
    <ligand>
        <name>substrate</name>
        <note>ligand shared between dimeric partners</note>
    </ligand>
</feature>
<feature type="binding site" description="in other chain">
    <location>
        <position position="131"/>
    </location>
    <ligand>
        <name>substrate</name>
        <note>ligand shared between dimeric partners</note>
    </ligand>
</feature>
<feature type="binding site" description="in other chain">
    <location>
        <begin position="187"/>
        <end position="188"/>
    </location>
    <ligand>
        <name>substrate</name>
        <note>ligand shared between dimeric partners</note>
    </ligand>
</feature>
<feature type="binding site" description="in other chain">
    <location>
        <position position="192"/>
    </location>
    <ligand>
        <name>substrate</name>
        <note>ligand shared between dimeric partners</note>
    </ligand>
</feature>
<feature type="binding site" description="in other chain">
    <location>
        <position position="261"/>
    </location>
    <ligand>
        <name>substrate</name>
        <note>ligand shared between dimeric partners</note>
    </ligand>
</feature>
<feature type="binding site" description="in other chain">
    <location>
        <position position="288"/>
    </location>
    <ligand>
        <name>substrate</name>
        <note>ligand shared between dimeric partners</note>
    </ligand>
</feature>
<feature type="binding site" evidence="1">
    <location>
        <position position="447"/>
    </location>
    <ligand>
        <name>substrate</name>
        <note>ligand shared between dimeric partners</note>
    </ligand>
</feature>
<feature type="binding site" evidence="1">
    <location>
        <position position="453"/>
    </location>
    <ligand>
        <name>substrate</name>
        <note>ligand shared between dimeric partners</note>
    </ligand>
</feature>
<feature type="binding site" evidence="1">
    <location>
        <begin position="478"/>
        <end position="481"/>
    </location>
    <ligand>
        <name>NADP(+)</name>
        <dbReference type="ChEBI" id="CHEBI:58349"/>
        <note>ligand shared between dimeric partners</note>
    </ligand>
</feature>
<feature type="modified residue" description="N6-acetyllysine" evidence="2">
    <location>
        <position position="38"/>
    </location>
</feature>
<feature type="modified residue" description="Phosphoserine" evidence="2">
    <location>
        <position position="57"/>
    </location>
</feature>
<feature type="modified residue" description="Phosphoserine" evidence="2">
    <location>
        <position position="129"/>
    </location>
</feature>
<feature type="strand" evidence="8">
    <location>
        <begin position="4"/>
        <end position="9"/>
    </location>
</feature>
<feature type="helix" evidence="8">
    <location>
        <begin position="13"/>
        <end position="24"/>
    </location>
</feature>
<feature type="strand" evidence="8">
    <location>
        <begin position="29"/>
        <end position="32"/>
    </location>
</feature>
<feature type="helix" evidence="8">
    <location>
        <begin position="37"/>
        <end position="44"/>
    </location>
</feature>
<feature type="turn" evidence="8">
    <location>
        <begin position="45"/>
        <end position="49"/>
    </location>
</feature>
<feature type="helix" evidence="8">
    <location>
        <begin position="58"/>
        <end position="64"/>
    </location>
</feature>
<feature type="strand" evidence="8">
    <location>
        <begin position="70"/>
        <end position="73"/>
    </location>
</feature>
<feature type="helix" evidence="8">
    <location>
        <begin position="79"/>
        <end position="91"/>
    </location>
</feature>
<feature type="strand" evidence="8">
    <location>
        <begin position="97"/>
        <end position="100"/>
    </location>
</feature>
<feature type="helix" evidence="8">
    <location>
        <begin position="106"/>
        <end position="118"/>
    </location>
</feature>
<feature type="strand" evidence="8">
    <location>
        <begin position="122"/>
        <end position="130"/>
    </location>
</feature>
<feature type="helix" evidence="8">
    <location>
        <begin position="131"/>
        <end position="137"/>
    </location>
</feature>
<feature type="strand" evidence="8">
    <location>
        <begin position="140"/>
        <end position="145"/>
    </location>
</feature>
<feature type="turn" evidence="8">
    <location>
        <begin position="147"/>
        <end position="149"/>
    </location>
</feature>
<feature type="helix" evidence="8">
    <location>
        <begin position="150"/>
        <end position="160"/>
    </location>
</feature>
<feature type="turn" evidence="7">
    <location>
        <begin position="165"/>
        <end position="167"/>
    </location>
</feature>
<feature type="strand" evidence="7">
    <location>
        <begin position="168"/>
        <end position="170"/>
    </location>
</feature>
<feature type="helix" evidence="8">
    <location>
        <begin position="179"/>
        <end position="207"/>
    </location>
</feature>
<feature type="helix" evidence="8">
    <location>
        <begin position="213"/>
        <end position="223"/>
    </location>
</feature>
<feature type="turn" evidence="8">
    <location>
        <begin position="224"/>
        <end position="228"/>
    </location>
</feature>
<feature type="helix" evidence="8">
    <location>
        <begin position="231"/>
        <end position="241"/>
    </location>
</feature>
<feature type="strand" evidence="8">
    <location>
        <begin position="247"/>
        <end position="250"/>
    </location>
</feature>
<feature type="helix" evidence="8">
    <location>
        <begin position="251"/>
        <end position="253"/>
    </location>
</feature>
<feature type="helix" evidence="8">
    <location>
        <begin position="263"/>
        <end position="274"/>
    </location>
</feature>
<feature type="helix" evidence="8">
    <location>
        <begin position="279"/>
        <end position="292"/>
    </location>
</feature>
<feature type="helix" evidence="8">
    <location>
        <begin position="294"/>
        <end position="303"/>
    </location>
</feature>
<feature type="helix" evidence="8">
    <location>
        <begin position="316"/>
        <end position="349"/>
    </location>
</feature>
<feature type="helix" evidence="8">
    <location>
        <begin position="355"/>
        <end position="361"/>
    </location>
</feature>
<feature type="strand" evidence="8">
    <location>
        <begin position="364"/>
        <end position="366"/>
    </location>
</feature>
<feature type="helix" evidence="8">
    <location>
        <begin position="372"/>
        <end position="382"/>
    </location>
</feature>
<feature type="helix" evidence="8">
    <location>
        <begin position="389"/>
        <end position="391"/>
    </location>
</feature>
<feature type="helix" evidence="8">
    <location>
        <begin position="393"/>
        <end position="416"/>
    </location>
</feature>
<feature type="helix" evidence="8">
    <location>
        <begin position="421"/>
        <end position="434"/>
    </location>
</feature>
<feature type="helix" evidence="8">
    <location>
        <begin position="440"/>
        <end position="451"/>
    </location>
</feature>
<feature type="strand" evidence="8">
    <location>
        <begin position="458"/>
        <end position="460"/>
    </location>
</feature>
<proteinExistence type="evidence at protein level"/>
<dbReference type="EC" id="1.1.1.44"/>
<dbReference type="EMBL" id="X60195">
    <property type="protein sequence ID" value="CAA42751.1"/>
    <property type="molecule type" value="mRNA"/>
</dbReference>
<dbReference type="PIR" id="S15280">
    <property type="entry name" value="S15280"/>
</dbReference>
<dbReference type="PIR" id="S27359">
    <property type="entry name" value="DESHGC"/>
</dbReference>
<dbReference type="RefSeq" id="NP_001009467.1">
    <property type="nucleotide sequence ID" value="NM_001009467.2"/>
</dbReference>
<dbReference type="PDB" id="1PGN">
    <property type="method" value="X-ray"/>
    <property type="resolution" value="2.30 A"/>
    <property type="chains" value="A=2-483"/>
</dbReference>
<dbReference type="PDB" id="1PGO">
    <property type="method" value="X-ray"/>
    <property type="resolution" value="2.50 A"/>
    <property type="chains" value="A=2-483"/>
</dbReference>
<dbReference type="PDB" id="1PGP">
    <property type="method" value="X-ray"/>
    <property type="resolution" value="2.50 A"/>
    <property type="chains" value="A=2-483"/>
</dbReference>
<dbReference type="PDB" id="1PGQ">
    <property type="method" value="X-ray"/>
    <property type="resolution" value="3.17 A"/>
    <property type="chains" value="A=2-483"/>
</dbReference>
<dbReference type="PDB" id="2PGD">
    <property type="method" value="X-ray"/>
    <property type="resolution" value="2.00 A"/>
    <property type="chains" value="A=2-483"/>
</dbReference>
<dbReference type="PDBsum" id="1PGN"/>
<dbReference type="PDBsum" id="1PGO"/>
<dbReference type="PDBsum" id="1PGP"/>
<dbReference type="PDBsum" id="1PGQ"/>
<dbReference type="PDBsum" id="2PGD"/>
<dbReference type="SMR" id="P00349"/>
<dbReference type="STRING" id="9940.ENSOARP00000005726"/>
<dbReference type="BindingDB" id="P00349"/>
<dbReference type="ChEMBL" id="CHEMBL1169597"/>
<dbReference type="PaxDb" id="9940-ENSOARP00000005726"/>
<dbReference type="GeneID" id="443541"/>
<dbReference type="KEGG" id="oas:443541"/>
<dbReference type="CTD" id="5226"/>
<dbReference type="eggNOG" id="KOG2653">
    <property type="taxonomic scope" value="Eukaryota"/>
</dbReference>
<dbReference type="OrthoDB" id="434986at2759"/>
<dbReference type="BRENDA" id="1.1.1.44">
    <property type="organism ID" value="2668"/>
</dbReference>
<dbReference type="SABIO-RK" id="P00349"/>
<dbReference type="UniPathway" id="UPA00115">
    <property type="reaction ID" value="UER00410"/>
</dbReference>
<dbReference type="EvolutionaryTrace" id="P00349"/>
<dbReference type="PRO" id="PR:P00349"/>
<dbReference type="Proteomes" id="UP000002356">
    <property type="component" value="Unplaced"/>
</dbReference>
<dbReference type="GO" id="GO:0005737">
    <property type="term" value="C:cytoplasm"/>
    <property type="evidence" value="ECO:0007669"/>
    <property type="project" value="UniProtKB-SubCell"/>
</dbReference>
<dbReference type="GO" id="GO:0050661">
    <property type="term" value="F:NADP binding"/>
    <property type="evidence" value="ECO:0007669"/>
    <property type="project" value="InterPro"/>
</dbReference>
<dbReference type="GO" id="GO:0004616">
    <property type="term" value="F:phosphogluconate dehydrogenase (decarboxylating) activity"/>
    <property type="evidence" value="ECO:0000314"/>
    <property type="project" value="UniProtKB"/>
</dbReference>
<dbReference type="GO" id="GO:0019521">
    <property type="term" value="P:D-gluconate metabolic process"/>
    <property type="evidence" value="ECO:0007669"/>
    <property type="project" value="UniProtKB-KW"/>
</dbReference>
<dbReference type="GO" id="GO:0006098">
    <property type="term" value="P:pentose-phosphate shunt"/>
    <property type="evidence" value="ECO:0000314"/>
    <property type="project" value="UniProtKB"/>
</dbReference>
<dbReference type="FunFam" id="1.10.1040.10:FF:000002">
    <property type="entry name" value="6-phosphogluconate dehydrogenase, decarboxylating"/>
    <property type="match status" value="1"/>
</dbReference>
<dbReference type="FunFam" id="1.20.5.320:FF:000002">
    <property type="entry name" value="6-phosphogluconate dehydrogenase, decarboxylating"/>
    <property type="match status" value="1"/>
</dbReference>
<dbReference type="FunFam" id="3.40.50.720:FF:000007">
    <property type="entry name" value="6-phosphogluconate dehydrogenase, decarboxylating"/>
    <property type="match status" value="1"/>
</dbReference>
<dbReference type="Gene3D" id="1.20.5.320">
    <property type="entry name" value="6-Phosphogluconate Dehydrogenase, domain 3"/>
    <property type="match status" value="1"/>
</dbReference>
<dbReference type="Gene3D" id="1.10.1040.10">
    <property type="entry name" value="N-(1-d-carboxylethyl)-l-norvaline Dehydrogenase, domain 2"/>
    <property type="match status" value="1"/>
</dbReference>
<dbReference type="Gene3D" id="3.40.50.720">
    <property type="entry name" value="NAD(P)-binding Rossmann-like Domain"/>
    <property type="match status" value="1"/>
</dbReference>
<dbReference type="InterPro" id="IPR008927">
    <property type="entry name" value="6-PGluconate_DH-like_C_sf"/>
</dbReference>
<dbReference type="InterPro" id="IPR013328">
    <property type="entry name" value="6PGD_dom2"/>
</dbReference>
<dbReference type="InterPro" id="IPR006114">
    <property type="entry name" value="6PGDH_C"/>
</dbReference>
<dbReference type="InterPro" id="IPR006113">
    <property type="entry name" value="6PGDH_Gnd/GntZ"/>
</dbReference>
<dbReference type="InterPro" id="IPR006115">
    <property type="entry name" value="6PGDH_NADP-bd"/>
</dbReference>
<dbReference type="InterPro" id="IPR006184">
    <property type="entry name" value="6PGdom_BS"/>
</dbReference>
<dbReference type="InterPro" id="IPR036291">
    <property type="entry name" value="NAD(P)-bd_dom_sf"/>
</dbReference>
<dbReference type="InterPro" id="IPR006183">
    <property type="entry name" value="Pgluconate_DH"/>
</dbReference>
<dbReference type="NCBIfam" id="TIGR00873">
    <property type="entry name" value="gnd"/>
    <property type="match status" value="1"/>
</dbReference>
<dbReference type="NCBIfam" id="NF006765">
    <property type="entry name" value="PRK09287.1"/>
    <property type="match status" value="1"/>
</dbReference>
<dbReference type="PANTHER" id="PTHR11811">
    <property type="entry name" value="6-PHOSPHOGLUCONATE DEHYDROGENASE"/>
    <property type="match status" value="1"/>
</dbReference>
<dbReference type="Pfam" id="PF00393">
    <property type="entry name" value="6PGD"/>
    <property type="match status" value="1"/>
</dbReference>
<dbReference type="Pfam" id="PF03446">
    <property type="entry name" value="NAD_binding_2"/>
    <property type="match status" value="1"/>
</dbReference>
<dbReference type="PIRSF" id="PIRSF000109">
    <property type="entry name" value="6PGD"/>
    <property type="match status" value="1"/>
</dbReference>
<dbReference type="PRINTS" id="PR00076">
    <property type="entry name" value="6PGDHDRGNASE"/>
</dbReference>
<dbReference type="SMART" id="SM01350">
    <property type="entry name" value="6PGD"/>
    <property type="match status" value="1"/>
</dbReference>
<dbReference type="SUPFAM" id="SSF48179">
    <property type="entry name" value="6-phosphogluconate dehydrogenase C-terminal domain-like"/>
    <property type="match status" value="1"/>
</dbReference>
<dbReference type="SUPFAM" id="SSF51735">
    <property type="entry name" value="NAD(P)-binding Rossmann-fold domains"/>
    <property type="match status" value="1"/>
</dbReference>
<dbReference type="PROSITE" id="PS00461">
    <property type="entry name" value="6PGD"/>
    <property type="match status" value="1"/>
</dbReference>
<reference key="1">
    <citation type="journal article" date="1992" name="Biochem. J.">
        <title>Sheep 6-phosphogluconate dehydrogenase. Revised protein sequence based upon the sequences of cDNA clones obtained with the polymerase chain reaction.</title>
        <authorList>
            <person name="Somers D.O."/>
            <person name="Medd S.M."/>
            <person name="Walker J.E."/>
            <person name="Adams M.J."/>
        </authorList>
    </citation>
    <scope>NUCLEOTIDE SEQUENCE [MRNA]</scope>
    <source>
        <tissue>Liver</tissue>
    </source>
</reference>
<reference key="2">
    <citation type="journal article" date="1983" name="J. Biol. Chem.">
        <title>Amino acid sequence of ovine 6-phosphogluconate dehydrogenase.</title>
        <authorList>
            <person name="Carne A."/>
            <person name="Walker J.E."/>
        </authorList>
    </citation>
    <scope>PRELIMINARY PROTEIN SEQUENCE OF 2-483</scope>
    <scope>CLEAVAGE OF INITIATOR METHIONINE</scope>
    <source>
        <tissue>Liver</tissue>
    </source>
</reference>
<reference key="3">
    <citation type="journal article" date="1983" name="EMBO J.">
        <title>The three dimensional structure of sheep liver 6-phosphogluconate dehydrogenase at 2.6-A resolution.</title>
        <authorList>
            <person name="Adams M.J."/>
            <person name="Archibald I.G."/>
            <person name="Bugg C.E."/>
            <person name="Carne A."/>
            <person name="Gover S."/>
            <person name="Helliwell J.R."/>
            <person name="Pickersgill R.W."/>
            <person name="White S.W."/>
        </authorList>
    </citation>
    <scope>X-RAY CRYSTALLOGRAPHY (2.6 ANGSTROMS)</scope>
</reference>
<reference key="4">
    <citation type="journal article" date="1991" name="Acta Crystallogr. B">
        <title>The structure of 6-phosphogluconate dehydrogenase refined at 2.5-A resolution.</title>
        <authorList>
            <person name="Adams M.J."/>
            <person name="Gover S."/>
            <person name="Leaback R."/>
            <person name="Phillips C."/>
            <person name="Somers D.O."/>
        </authorList>
    </citation>
    <scope>X-RAY CRYSTALLOGRAPHY (2.5 ANGSTROMS)</scope>
</reference>
<reference key="5">
    <citation type="journal article" date="1994" name="Structure">
        <title>Crystallographic study of coenzyme, coenzyme analogue and substrate binding in 6-phosphogluconate dehydrogenase: implications for NADP specificity and the enzyme mechanism.</title>
        <authorList>
            <person name="Adams M.J."/>
            <person name="Ellis G.H."/>
            <person name="Gover S."/>
            <person name="Naylor C.E."/>
            <person name="Phillips C."/>
        </authorList>
    </citation>
    <scope>X-RAY CRYSTALLOGRAPHY (2.3 ANGSTROMS) OF 2-483 IN COMPLEXES WITH NADP AND SUBSTRATE</scope>
    <scope>SUBUNIT</scope>
</reference>
<reference key="6">
    <citation type="journal article" date="1995" name="Acta Crystallogr. D">
        <title>Structure of 6-phosphogluconate dehydrogenase refined at 2-A resolution.</title>
        <authorList>
            <person name="Phillips C."/>
            <person name="Gover S."/>
            <person name="Adams M.J."/>
        </authorList>
    </citation>
    <scope>X-RAY CRYSTALLOGRAPHY (2.0 ANGSTROMS) OF 2-483</scope>
    <scope>SUBUNIT</scope>
</reference>
<keyword id="KW-0002">3D-structure</keyword>
<keyword id="KW-0007">Acetylation</keyword>
<keyword id="KW-0963">Cytoplasm</keyword>
<keyword id="KW-0903">Direct protein sequencing</keyword>
<keyword id="KW-0311">Gluconate utilization</keyword>
<keyword id="KW-0521">NADP</keyword>
<keyword id="KW-0560">Oxidoreductase</keyword>
<keyword id="KW-0570">Pentose shunt</keyword>
<keyword id="KW-0597">Phosphoprotein</keyword>
<keyword id="KW-1185">Reference proteome</keyword>